<organism>
    <name type="scientific">Natronomonas pharaonis (strain ATCC 35678 / DSM 2160 / CIP 103997 / JCM 8858 / NBRC 14720 / NCIMB 2260 / Gabara)</name>
    <name type="common">Halobacterium pharaonis</name>
    <dbReference type="NCBI Taxonomy" id="348780"/>
    <lineage>
        <taxon>Archaea</taxon>
        <taxon>Methanobacteriati</taxon>
        <taxon>Methanobacteriota</taxon>
        <taxon>Stenosarchaea group</taxon>
        <taxon>Halobacteria</taxon>
        <taxon>Halobacteriales</taxon>
        <taxon>Haloarculaceae</taxon>
        <taxon>Natronomonas</taxon>
    </lineage>
</organism>
<gene>
    <name evidence="1" type="primary">lig</name>
    <name type="ordered locus">NP_3474A</name>
</gene>
<proteinExistence type="inferred from homology"/>
<dbReference type="EC" id="6.5.1.1" evidence="1"/>
<dbReference type="EMBL" id="CR936257">
    <property type="protein sequence ID" value="CAI49828.1"/>
    <property type="molecule type" value="Genomic_DNA"/>
</dbReference>
<dbReference type="RefSeq" id="WP_011323448.1">
    <property type="nucleotide sequence ID" value="NC_007426.1"/>
</dbReference>
<dbReference type="SMR" id="Q3IPX0"/>
<dbReference type="STRING" id="348780.NP_3474A"/>
<dbReference type="EnsemblBacteria" id="CAI49828">
    <property type="protein sequence ID" value="CAI49828"/>
    <property type="gene ID" value="NP_3474A"/>
</dbReference>
<dbReference type="GeneID" id="3702886"/>
<dbReference type="KEGG" id="nph:NP_3474A"/>
<dbReference type="eggNOG" id="arCOG01347">
    <property type="taxonomic scope" value="Archaea"/>
</dbReference>
<dbReference type="HOGENOM" id="CLU_005138_6_0_2"/>
<dbReference type="OrthoDB" id="31274at2157"/>
<dbReference type="Proteomes" id="UP000002698">
    <property type="component" value="Chromosome"/>
</dbReference>
<dbReference type="GO" id="GO:0005524">
    <property type="term" value="F:ATP binding"/>
    <property type="evidence" value="ECO:0007669"/>
    <property type="project" value="UniProtKB-UniRule"/>
</dbReference>
<dbReference type="GO" id="GO:0003677">
    <property type="term" value="F:DNA binding"/>
    <property type="evidence" value="ECO:0007669"/>
    <property type="project" value="InterPro"/>
</dbReference>
<dbReference type="GO" id="GO:0003910">
    <property type="term" value="F:DNA ligase (ATP) activity"/>
    <property type="evidence" value="ECO:0007669"/>
    <property type="project" value="UniProtKB-UniRule"/>
</dbReference>
<dbReference type="GO" id="GO:0046872">
    <property type="term" value="F:metal ion binding"/>
    <property type="evidence" value="ECO:0007669"/>
    <property type="project" value="UniProtKB-KW"/>
</dbReference>
<dbReference type="GO" id="GO:0051301">
    <property type="term" value="P:cell division"/>
    <property type="evidence" value="ECO:0007669"/>
    <property type="project" value="UniProtKB-KW"/>
</dbReference>
<dbReference type="GO" id="GO:0071897">
    <property type="term" value="P:DNA biosynthetic process"/>
    <property type="evidence" value="ECO:0007669"/>
    <property type="project" value="InterPro"/>
</dbReference>
<dbReference type="GO" id="GO:0006310">
    <property type="term" value="P:DNA recombination"/>
    <property type="evidence" value="ECO:0007669"/>
    <property type="project" value="UniProtKB-UniRule"/>
</dbReference>
<dbReference type="GO" id="GO:0006281">
    <property type="term" value="P:DNA repair"/>
    <property type="evidence" value="ECO:0007669"/>
    <property type="project" value="UniProtKB-UniRule"/>
</dbReference>
<dbReference type="GO" id="GO:0006273">
    <property type="term" value="P:lagging strand elongation"/>
    <property type="evidence" value="ECO:0007669"/>
    <property type="project" value="TreeGrafter"/>
</dbReference>
<dbReference type="CDD" id="cd07901">
    <property type="entry name" value="Adenylation_DNA_ligase_Arch_LigB"/>
    <property type="match status" value="1"/>
</dbReference>
<dbReference type="CDD" id="cd07972">
    <property type="entry name" value="OBF_DNA_ligase_Arch_LigB"/>
    <property type="match status" value="1"/>
</dbReference>
<dbReference type="FunFam" id="1.10.3260.10:FF:000007">
    <property type="entry name" value="DNA ligase"/>
    <property type="match status" value="1"/>
</dbReference>
<dbReference type="Gene3D" id="1.10.3260.10">
    <property type="entry name" value="DNA ligase, ATP-dependent, N-terminal domain"/>
    <property type="match status" value="1"/>
</dbReference>
<dbReference type="Gene3D" id="3.30.470.30">
    <property type="entry name" value="DNA ligase/mRNA capping enzyme"/>
    <property type="match status" value="1"/>
</dbReference>
<dbReference type="Gene3D" id="2.40.50.140">
    <property type="entry name" value="Nucleic acid-binding proteins"/>
    <property type="match status" value="1"/>
</dbReference>
<dbReference type="HAMAP" id="MF_00407">
    <property type="entry name" value="DNA_ligase"/>
    <property type="match status" value="1"/>
</dbReference>
<dbReference type="InterPro" id="IPR050191">
    <property type="entry name" value="ATP-dep_DNA_ligase"/>
</dbReference>
<dbReference type="InterPro" id="IPR022865">
    <property type="entry name" value="DNA_ligae_ATP-dep_bac/arc"/>
</dbReference>
<dbReference type="InterPro" id="IPR000977">
    <property type="entry name" value="DNA_ligase_ATP-dep"/>
</dbReference>
<dbReference type="InterPro" id="IPR012309">
    <property type="entry name" value="DNA_ligase_ATP-dep_C"/>
</dbReference>
<dbReference type="InterPro" id="IPR012310">
    <property type="entry name" value="DNA_ligase_ATP-dep_cent"/>
</dbReference>
<dbReference type="InterPro" id="IPR016059">
    <property type="entry name" value="DNA_ligase_ATP-dep_CS"/>
</dbReference>
<dbReference type="InterPro" id="IPR012308">
    <property type="entry name" value="DNA_ligase_ATP-dep_N"/>
</dbReference>
<dbReference type="InterPro" id="IPR036599">
    <property type="entry name" value="DNA_ligase_N_sf"/>
</dbReference>
<dbReference type="InterPro" id="IPR054890">
    <property type="entry name" value="LigA_Halo"/>
</dbReference>
<dbReference type="InterPro" id="IPR012340">
    <property type="entry name" value="NA-bd_OB-fold"/>
</dbReference>
<dbReference type="NCBIfam" id="TIGR00574">
    <property type="entry name" value="dnl1"/>
    <property type="match status" value="1"/>
</dbReference>
<dbReference type="NCBIfam" id="NF041331">
    <property type="entry name" value="LigA_Halo"/>
    <property type="match status" value="1"/>
</dbReference>
<dbReference type="PANTHER" id="PTHR45674:SF7">
    <property type="entry name" value="DNA LIGASE"/>
    <property type="match status" value="1"/>
</dbReference>
<dbReference type="PANTHER" id="PTHR45674">
    <property type="entry name" value="DNA LIGASE 1/3 FAMILY MEMBER"/>
    <property type="match status" value="1"/>
</dbReference>
<dbReference type="Pfam" id="PF04679">
    <property type="entry name" value="DNA_ligase_A_C"/>
    <property type="match status" value="1"/>
</dbReference>
<dbReference type="Pfam" id="PF01068">
    <property type="entry name" value="DNA_ligase_A_M"/>
    <property type="match status" value="1"/>
</dbReference>
<dbReference type="Pfam" id="PF04675">
    <property type="entry name" value="DNA_ligase_A_N"/>
    <property type="match status" value="1"/>
</dbReference>
<dbReference type="SUPFAM" id="SSF117018">
    <property type="entry name" value="ATP-dependent DNA ligase DNA-binding domain"/>
    <property type="match status" value="1"/>
</dbReference>
<dbReference type="SUPFAM" id="SSF56091">
    <property type="entry name" value="DNA ligase/mRNA capping enzyme, catalytic domain"/>
    <property type="match status" value="1"/>
</dbReference>
<dbReference type="SUPFAM" id="SSF50249">
    <property type="entry name" value="Nucleic acid-binding proteins"/>
    <property type="match status" value="1"/>
</dbReference>
<dbReference type="PROSITE" id="PS00697">
    <property type="entry name" value="DNA_LIGASE_A1"/>
    <property type="match status" value="1"/>
</dbReference>
<dbReference type="PROSITE" id="PS50160">
    <property type="entry name" value="DNA_LIGASE_A3"/>
    <property type="match status" value="1"/>
</dbReference>
<evidence type="ECO:0000255" key="1">
    <source>
        <dbReference type="HAMAP-Rule" id="MF_00407"/>
    </source>
</evidence>
<reference key="1">
    <citation type="journal article" date="2005" name="Genome Res.">
        <title>Living with two extremes: conclusions from the genome sequence of Natronomonas pharaonis.</title>
        <authorList>
            <person name="Falb M."/>
            <person name="Pfeiffer F."/>
            <person name="Palm P."/>
            <person name="Rodewald K."/>
            <person name="Hickmann V."/>
            <person name="Tittor J."/>
            <person name="Oesterhelt D."/>
        </authorList>
    </citation>
    <scope>NUCLEOTIDE SEQUENCE [LARGE SCALE GENOMIC DNA]</scope>
    <source>
        <strain>ATCC 35678 / DSM 2160 / CIP 103997 / JCM 8858 / NBRC 14720 / NCIMB 2260 / Gabara</strain>
    </source>
</reference>
<name>DNLI_NATPD</name>
<feature type="chain" id="PRO_1000049874" description="DNA ligase">
    <location>
        <begin position="1"/>
        <end position="548"/>
    </location>
</feature>
<feature type="active site" description="N6-AMP-lysine intermediate" evidence="1">
    <location>
        <position position="254"/>
    </location>
</feature>
<feature type="binding site" evidence="1">
    <location>
        <position position="252"/>
    </location>
    <ligand>
        <name>ATP</name>
        <dbReference type="ChEBI" id="CHEBI:30616"/>
    </ligand>
</feature>
<feature type="binding site" evidence="1">
    <location>
        <position position="259"/>
    </location>
    <ligand>
        <name>ATP</name>
        <dbReference type="ChEBI" id="CHEBI:30616"/>
    </ligand>
</feature>
<feature type="binding site" evidence="1">
    <location>
        <position position="274"/>
    </location>
    <ligand>
        <name>ATP</name>
        <dbReference type="ChEBI" id="CHEBI:30616"/>
    </ligand>
</feature>
<feature type="binding site" evidence="1">
    <location>
        <position position="303"/>
    </location>
    <ligand>
        <name>ATP</name>
        <dbReference type="ChEBI" id="CHEBI:30616"/>
    </ligand>
</feature>
<feature type="binding site" evidence="1">
    <location>
        <position position="343"/>
    </location>
    <ligand>
        <name>ATP</name>
        <dbReference type="ChEBI" id="CHEBI:30616"/>
    </ligand>
</feature>
<feature type="binding site" evidence="1">
    <location>
        <position position="414"/>
    </location>
    <ligand>
        <name>ATP</name>
        <dbReference type="ChEBI" id="CHEBI:30616"/>
    </ligand>
</feature>
<feature type="binding site" evidence="1">
    <location>
        <position position="420"/>
    </location>
    <ligand>
        <name>ATP</name>
        <dbReference type="ChEBI" id="CHEBI:30616"/>
    </ligand>
</feature>
<keyword id="KW-0067">ATP-binding</keyword>
<keyword id="KW-0131">Cell cycle</keyword>
<keyword id="KW-0132">Cell division</keyword>
<keyword id="KW-0227">DNA damage</keyword>
<keyword id="KW-0233">DNA recombination</keyword>
<keyword id="KW-0234">DNA repair</keyword>
<keyword id="KW-0235">DNA replication</keyword>
<keyword id="KW-0436">Ligase</keyword>
<keyword id="KW-0460">Magnesium</keyword>
<keyword id="KW-0479">Metal-binding</keyword>
<keyword id="KW-0547">Nucleotide-binding</keyword>
<keyword id="KW-1185">Reference proteome</keyword>
<accession>Q3IPX0</accession>
<comment type="function">
    <text evidence="1">DNA ligase that seals nicks in double-stranded DNA during DNA replication, DNA recombination and DNA repair.</text>
</comment>
<comment type="catalytic activity">
    <reaction evidence="1">
        <text>ATP + (deoxyribonucleotide)n-3'-hydroxyl + 5'-phospho-(deoxyribonucleotide)m = (deoxyribonucleotide)n+m + AMP + diphosphate.</text>
        <dbReference type="EC" id="6.5.1.1"/>
    </reaction>
</comment>
<comment type="cofactor">
    <cofactor evidence="1">
        <name>Mg(2+)</name>
        <dbReference type="ChEBI" id="CHEBI:18420"/>
    </cofactor>
</comment>
<comment type="similarity">
    <text evidence="1">Belongs to the ATP-dependent DNA ligase family.</text>
</comment>
<sequence>MEFAEFAARAAEIESEPADLETVDLVATLCADAGDDLGTVARFVQGRVFPAHDSTKLDIGPSLCYEALAKAAGPNVDSDDIERRLAEVGEIGAVAESLDLGGQQGLAAFGGGTDREALTVSGVEETLQALAAAAGDGSTDAKRDRLFDLFNRAEPTEARFLARLVLGEMRVGVGEGTVRDAIAAAFEVPEPDVERALQVANDCGLVAETARDDGAAGLDDIGLVVGRPVKAMLAQAGTAVEALDEWGTAAVETKYDGARVQVHYDGDSARLFSRNLEEVTEPLPEVVEFVEQSLSVPAILDGEVVAVDDDGTPRPFQEILRRFRRKHDVAAAREDVSVELYAFDCLHVDGEDLLDTPLSERHDRLESLLADGVSPLSYADDADEVADIEADALDAGHEGIMLKNPDSTYTPGSRGKNWLKRKPDVETLDLVVTGAEWGEGRRANLLGTFVVSARADDGYEPVGKVATGITDEELERLHERLQPHVRTEDGTDVDIEPAVVFEVGYEEIQQSPTYGSGYALRFPRFVGVREDKSPSDADSLERIDRLTS</sequence>
<protein>
    <recommendedName>
        <fullName evidence="1">DNA ligase</fullName>
        <ecNumber evidence="1">6.5.1.1</ecNumber>
    </recommendedName>
    <alternativeName>
        <fullName evidence="1">Polydeoxyribonucleotide synthase [ATP]</fullName>
    </alternativeName>
</protein>